<feature type="chain" id="PRO_0000206397" description="3-ketoacyl-CoA thiolase">
    <location>
        <begin position="1"/>
        <end position="391"/>
    </location>
</feature>
<feature type="active site" description="Acyl-thioester intermediate" evidence="1">
    <location>
        <position position="95"/>
    </location>
</feature>
<feature type="active site" description="Proton acceptor" evidence="1">
    <location>
        <position position="347"/>
    </location>
</feature>
<feature type="active site" description="Proton acceptor" evidence="1">
    <location>
        <position position="377"/>
    </location>
</feature>
<accession>Q87TP0</accession>
<sequence length="391" mass="41406">MTNQTRNVVVVDCLRTPMGRSKGGAFRHTRAEDLSAHLMKGILARNPQVNPSEIEDIYWGCVQQTLEQGFNIARNAALLAGLPIEIGAVTVNRLCGSSMQALHDGTRAIMTGDAEICLIGGVEHMGHVPMNHGVDFHPGMSKNVAKAAGMMGLTAEMLGKLHGISREQQDEFAARSHARAHAATLEGRFKNEILPTEGHAADGTLFQLDYDEVIRPETTVEGLSQLRPVFDPANGTVTAGTSSALSDGASAMLIMSEEKANELGLKIRARIKGMAIAGCDPSIMGYGPVPATQKALKRAGLAIEDMDVVELNEAFAAQSLPCAKDLGLLEVMDEKVNLNGGAIALGHPLGCSGARISTTLINLMEAKDAKYGLATMCIGLGQGIATVFERP</sequence>
<evidence type="ECO:0000255" key="1">
    <source>
        <dbReference type="HAMAP-Rule" id="MF_01620"/>
    </source>
</evidence>
<gene>
    <name evidence="1" type="primary">fadA</name>
    <name type="ordered locus">VP0029</name>
</gene>
<reference key="1">
    <citation type="journal article" date="2003" name="Lancet">
        <title>Genome sequence of Vibrio parahaemolyticus: a pathogenic mechanism distinct from that of V. cholerae.</title>
        <authorList>
            <person name="Makino K."/>
            <person name="Oshima K."/>
            <person name="Kurokawa K."/>
            <person name="Yokoyama K."/>
            <person name="Uda T."/>
            <person name="Tagomori K."/>
            <person name="Iijima Y."/>
            <person name="Najima M."/>
            <person name="Nakano M."/>
            <person name="Yamashita A."/>
            <person name="Kubota Y."/>
            <person name="Kimura S."/>
            <person name="Yasunaga T."/>
            <person name="Honda T."/>
            <person name="Shinagawa H."/>
            <person name="Hattori M."/>
            <person name="Iida T."/>
        </authorList>
    </citation>
    <scope>NUCLEOTIDE SEQUENCE [LARGE SCALE GENOMIC DNA]</scope>
    <source>
        <strain>RIMD 2210633</strain>
    </source>
</reference>
<keyword id="KW-0012">Acyltransferase</keyword>
<keyword id="KW-0963">Cytoplasm</keyword>
<keyword id="KW-0276">Fatty acid metabolism</keyword>
<keyword id="KW-0442">Lipid degradation</keyword>
<keyword id="KW-0443">Lipid metabolism</keyword>
<keyword id="KW-0808">Transferase</keyword>
<proteinExistence type="inferred from homology"/>
<protein>
    <recommendedName>
        <fullName evidence="1">3-ketoacyl-CoA thiolase</fullName>
        <ecNumber evidence="1">2.3.1.16</ecNumber>
    </recommendedName>
    <alternativeName>
        <fullName evidence="1">Acetyl-CoA acyltransferase</fullName>
    </alternativeName>
    <alternativeName>
        <fullName evidence="1">Beta-ketothiolase</fullName>
    </alternativeName>
    <alternativeName>
        <fullName evidence="1">Fatty acid oxidation complex subunit beta</fullName>
    </alternativeName>
</protein>
<name>FADA_VIBPA</name>
<comment type="function">
    <text evidence="1">Catalyzes the final step of fatty acid oxidation in which acetyl-CoA is released and the CoA ester of a fatty acid two carbons shorter is formed.</text>
</comment>
<comment type="catalytic activity">
    <reaction evidence="1">
        <text>an acyl-CoA + acetyl-CoA = a 3-oxoacyl-CoA + CoA</text>
        <dbReference type="Rhea" id="RHEA:21564"/>
        <dbReference type="ChEBI" id="CHEBI:57287"/>
        <dbReference type="ChEBI" id="CHEBI:57288"/>
        <dbReference type="ChEBI" id="CHEBI:58342"/>
        <dbReference type="ChEBI" id="CHEBI:90726"/>
        <dbReference type="EC" id="2.3.1.16"/>
    </reaction>
</comment>
<comment type="pathway">
    <text evidence="1">Lipid metabolism; fatty acid beta-oxidation.</text>
</comment>
<comment type="subunit">
    <text evidence="1">Heterotetramer of two alpha chains (FadB) and two beta chains (FadA).</text>
</comment>
<comment type="subcellular location">
    <subcellularLocation>
        <location evidence="1">Cytoplasm</location>
    </subcellularLocation>
</comment>
<comment type="similarity">
    <text evidence="1">Belongs to the thiolase-like superfamily. Thiolase family.</text>
</comment>
<organism>
    <name type="scientific">Vibrio parahaemolyticus serotype O3:K6 (strain RIMD 2210633)</name>
    <dbReference type="NCBI Taxonomy" id="223926"/>
    <lineage>
        <taxon>Bacteria</taxon>
        <taxon>Pseudomonadati</taxon>
        <taxon>Pseudomonadota</taxon>
        <taxon>Gammaproteobacteria</taxon>
        <taxon>Vibrionales</taxon>
        <taxon>Vibrionaceae</taxon>
        <taxon>Vibrio</taxon>
    </lineage>
</organism>
<dbReference type="EC" id="2.3.1.16" evidence="1"/>
<dbReference type="EMBL" id="BA000031">
    <property type="protein sequence ID" value="BAC58292.1"/>
    <property type="molecule type" value="Genomic_DNA"/>
</dbReference>
<dbReference type="RefSeq" id="NP_796408.1">
    <property type="nucleotide sequence ID" value="NC_004603.1"/>
</dbReference>
<dbReference type="RefSeq" id="WP_005458696.1">
    <property type="nucleotide sequence ID" value="NC_004603.1"/>
</dbReference>
<dbReference type="SMR" id="Q87TP0"/>
<dbReference type="GeneID" id="1187485"/>
<dbReference type="KEGG" id="vpa:VP0029"/>
<dbReference type="PATRIC" id="fig|223926.6.peg.29"/>
<dbReference type="eggNOG" id="COG0183">
    <property type="taxonomic scope" value="Bacteria"/>
</dbReference>
<dbReference type="HOGENOM" id="CLU_031026_2_2_6"/>
<dbReference type="UniPathway" id="UPA00659"/>
<dbReference type="Proteomes" id="UP000002493">
    <property type="component" value="Chromosome 1"/>
</dbReference>
<dbReference type="GO" id="GO:0005737">
    <property type="term" value="C:cytoplasm"/>
    <property type="evidence" value="ECO:0007669"/>
    <property type="project" value="UniProtKB-SubCell"/>
</dbReference>
<dbReference type="GO" id="GO:0003988">
    <property type="term" value="F:acetyl-CoA C-acyltransferase activity"/>
    <property type="evidence" value="ECO:0007669"/>
    <property type="project" value="UniProtKB-UniRule"/>
</dbReference>
<dbReference type="GO" id="GO:0006635">
    <property type="term" value="P:fatty acid beta-oxidation"/>
    <property type="evidence" value="ECO:0007669"/>
    <property type="project" value="UniProtKB-UniRule"/>
</dbReference>
<dbReference type="GO" id="GO:0010124">
    <property type="term" value="P:phenylacetate catabolic process"/>
    <property type="evidence" value="ECO:0007669"/>
    <property type="project" value="TreeGrafter"/>
</dbReference>
<dbReference type="CDD" id="cd00751">
    <property type="entry name" value="thiolase"/>
    <property type="match status" value="1"/>
</dbReference>
<dbReference type="FunFam" id="3.40.47.10:FF:000010">
    <property type="entry name" value="Acetyl-CoA acetyltransferase (Thiolase)"/>
    <property type="match status" value="1"/>
</dbReference>
<dbReference type="Gene3D" id="3.40.47.10">
    <property type="match status" value="2"/>
</dbReference>
<dbReference type="HAMAP" id="MF_01620">
    <property type="entry name" value="FadA"/>
    <property type="match status" value="1"/>
</dbReference>
<dbReference type="InterPro" id="IPR012805">
    <property type="entry name" value="FadA"/>
</dbReference>
<dbReference type="InterPro" id="IPR002155">
    <property type="entry name" value="Thiolase"/>
</dbReference>
<dbReference type="InterPro" id="IPR016039">
    <property type="entry name" value="Thiolase-like"/>
</dbReference>
<dbReference type="InterPro" id="IPR050215">
    <property type="entry name" value="Thiolase-like_sf_Thiolase"/>
</dbReference>
<dbReference type="InterPro" id="IPR020615">
    <property type="entry name" value="Thiolase_acyl_enz_int_AS"/>
</dbReference>
<dbReference type="InterPro" id="IPR020610">
    <property type="entry name" value="Thiolase_AS"/>
</dbReference>
<dbReference type="InterPro" id="IPR020617">
    <property type="entry name" value="Thiolase_C"/>
</dbReference>
<dbReference type="InterPro" id="IPR020613">
    <property type="entry name" value="Thiolase_CS"/>
</dbReference>
<dbReference type="InterPro" id="IPR020616">
    <property type="entry name" value="Thiolase_N"/>
</dbReference>
<dbReference type="NCBIfam" id="TIGR01930">
    <property type="entry name" value="AcCoA-C-Actrans"/>
    <property type="match status" value="1"/>
</dbReference>
<dbReference type="NCBIfam" id="TIGR02445">
    <property type="entry name" value="fadA"/>
    <property type="match status" value="1"/>
</dbReference>
<dbReference type="NCBIfam" id="NF006510">
    <property type="entry name" value="PRK08947.1"/>
    <property type="match status" value="1"/>
</dbReference>
<dbReference type="PANTHER" id="PTHR43853:SF11">
    <property type="entry name" value="3-KETOACYL-COA THIOLASE FADA"/>
    <property type="match status" value="1"/>
</dbReference>
<dbReference type="PANTHER" id="PTHR43853">
    <property type="entry name" value="3-KETOACYL-COA THIOLASE, PEROXISOMAL"/>
    <property type="match status" value="1"/>
</dbReference>
<dbReference type="Pfam" id="PF02803">
    <property type="entry name" value="Thiolase_C"/>
    <property type="match status" value="1"/>
</dbReference>
<dbReference type="Pfam" id="PF00108">
    <property type="entry name" value="Thiolase_N"/>
    <property type="match status" value="1"/>
</dbReference>
<dbReference type="PIRSF" id="PIRSF000429">
    <property type="entry name" value="Ac-CoA_Ac_transf"/>
    <property type="match status" value="1"/>
</dbReference>
<dbReference type="SUPFAM" id="SSF53901">
    <property type="entry name" value="Thiolase-like"/>
    <property type="match status" value="2"/>
</dbReference>
<dbReference type="PROSITE" id="PS00098">
    <property type="entry name" value="THIOLASE_1"/>
    <property type="match status" value="1"/>
</dbReference>
<dbReference type="PROSITE" id="PS00737">
    <property type="entry name" value="THIOLASE_2"/>
    <property type="match status" value="1"/>
</dbReference>
<dbReference type="PROSITE" id="PS00099">
    <property type="entry name" value="THIOLASE_3"/>
    <property type="match status" value="1"/>
</dbReference>